<comment type="function">
    <text evidence="3 4">Transcription factor which plays a key role in the Hippo signaling pathway, a pathway involved in organ size control and tumor suppression by restricting proliferation and promoting apoptosis. The core of this pathway is composed of a kinase cascade wherein MST1/MST2, in complex with its regulatory protein SAV1, phosphorylates and activates LATS1/2 in complex with its regulatory protein MOB1, which in turn phosphorylates and inactivates YAP1 oncoprotein and WWTR1/TAZ. Acts by mediating gene expression of YAP1 and WWTR1/TAZ, thereby regulating cell proliferation, migration and epithelial mesenchymal transition (EMT) induction. Binds specifically and non-cooperatively to the Sph and GT-IIC 'enhansons' (5'-GTGGAATGT-3') and activates transcription. Binds to the M-CAT motif.</text>
</comment>
<comment type="subunit">
    <text evidence="3 4 5">Interacts with YAP1 and WWTR1/TAZ.</text>
</comment>
<comment type="interaction">
    <interactant intactId="EBI-747736">
        <id>Q15561</id>
    </interactant>
    <interactant intactId="EBI-11977221">
        <id>Q86Z20</id>
        <label>CCDC125</label>
    </interactant>
    <organismsDiffer>false</organismsDiffer>
    <experiments>3</experiments>
</comment>
<comment type="interaction">
    <interactant intactId="EBI-747736">
        <id>Q15561</id>
    </interactant>
    <interactant intactId="EBI-2548868">
        <id>P0C7W6</id>
        <label>CCDC172</label>
    </interactant>
    <organismsDiffer>false</organismsDiffer>
    <experiments>3</experiments>
</comment>
<comment type="interaction">
    <interactant intactId="EBI-747736">
        <id>Q15561</id>
    </interactant>
    <interactant intactId="EBI-1181367">
        <id>Q01850</id>
        <label>CDR2</label>
    </interactant>
    <organismsDiffer>false</organismsDiffer>
    <experiments>3</experiments>
</comment>
<comment type="interaction">
    <interactant intactId="EBI-747736">
        <id>Q15561</id>
    </interactant>
    <interactant intactId="EBI-747776">
        <id>Q53EZ4</id>
        <label>CEP55</label>
    </interactant>
    <organismsDiffer>false</organismsDiffer>
    <experiments>5</experiments>
</comment>
<comment type="interaction">
    <interactant intactId="EBI-747736">
        <id>Q15561</id>
    </interactant>
    <interactant intactId="EBI-740680">
        <id>Q8WWB3</id>
        <label>DYDC1</label>
    </interactant>
    <organismsDiffer>false</organismsDiffer>
    <experiments>3</experiments>
</comment>
<comment type="interaction">
    <interactant intactId="EBI-747736">
        <id>Q15561</id>
    </interactant>
    <interactant intactId="EBI-618309">
        <id>Q08379</id>
        <label>GOLGA2</label>
    </interactant>
    <organismsDiffer>false</organismsDiffer>
    <experiments>6</experiments>
</comment>
<comment type="interaction">
    <interactant intactId="EBI-747736">
        <id>Q15561</id>
    </interactant>
    <interactant intactId="EBI-5916454">
        <id>A6NEM1</id>
        <label>GOLGA6L9</label>
    </interactant>
    <organismsDiffer>false</organismsDiffer>
    <experiments>3</experiments>
</comment>
<comment type="interaction">
    <interactant intactId="EBI-747736">
        <id>Q15561</id>
    </interactant>
    <interactant intactId="EBI-2514791">
        <id>Q96CS2</id>
        <label>HAUS1</label>
    </interactant>
    <organismsDiffer>false</organismsDiffer>
    <experiments>3</experiments>
</comment>
<comment type="interaction">
    <interactant intactId="EBI-747736">
        <id>Q15561</id>
    </interactant>
    <interactant intactId="EBI-10172004">
        <id>Q8IX15-3</id>
        <label>HOMEZ</label>
    </interactant>
    <organismsDiffer>false</organismsDiffer>
    <experiments>3</experiments>
</comment>
<comment type="interaction">
    <interactant intactId="EBI-747736">
        <id>Q15561</id>
    </interactant>
    <interactant intactId="EBI-6509505">
        <id>Q0VD86</id>
        <label>INCA1</label>
    </interactant>
    <organismsDiffer>false</organismsDiffer>
    <experiments>3</experiments>
</comment>
<comment type="interaction">
    <interactant intactId="EBI-747736">
        <id>Q15561</id>
    </interactant>
    <interactant intactId="EBI-3044087">
        <id>Q7Z3Y8</id>
        <label>KRT27</label>
    </interactant>
    <organismsDiffer>false</organismsDiffer>
    <experiments>3</experiments>
</comment>
<comment type="interaction">
    <interactant intactId="EBI-747736">
        <id>Q15561</id>
    </interactant>
    <interactant intactId="EBI-948001">
        <id>Q15323</id>
        <label>KRT31</label>
    </interactant>
    <organismsDiffer>false</organismsDiffer>
    <experiments>3</experiments>
</comment>
<comment type="interaction">
    <interactant intactId="EBI-747736">
        <id>Q15561</id>
    </interactant>
    <interactant intactId="EBI-10171697">
        <id>Q6A162</id>
        <label>KRT40</label>
    </interactant>
    <organismsDiffer>false</organismsDiffer>
    <experiments>6</experiments>
</comment>
<comment type="interaction">
    <interactant intactId="EBI-747736">
        <id>Q15561</id>
    </interactant>
    <interactant intactId="EBI-740738">
        <id>O95751</id>
        <label>LDOC1</label>
    </interactant>
    <organismsDiffer>false</organismsDiffer>
    <experiments>3</experiments>
</comment>
<comment type="interaction">
    <interactant intactId="EBI-747736">
        <id>Q15561</id>
    </interactant>
    <interactant intactId="EBI-741037">
        <id>Q9BRK4</id>
        <label>LZTS2</label>
    </interactant>
    <organismsDiffer>false</organismsDiffer>
    <experiments>3</experiments>
</comment>
<comment type="interaction">
    <interactant intactId="EBI-747736">
        <id>Q15561</id>
    </interactant>
    <interactant intactId="EBI-11522433">
        <id>Q5JR59-3</id>
        <label>MTUS2</label>
    </interactant>
    <organismsDiffer>false</organismsDiffer>
    <experiments>6</experiments>
</comment>
<comment type="interaction">
    <interactant intactId="EBI-747736">
        <id>Q15561</id>
    </interactant>
    <interactant intactId="EBI-302345">
        <id>Q8ND90</id>
        <label>PNMA1</label>
    </interactant>
    <organismsDiffer>false</organismsDiffer>
    <experiments>3</experiments>
</comment>
<comment type="interaction">
    <interactant intactId="EBI-747736">
        <id>Q15561</id>
    </interactant>
    <interactant intactId="EBI-3957793">
        <id>Q9GZV8</id>
        <label>PRDM14</label>
    </interactant>
    <organismsDiffer>false</organismsDiffer>
    <experiments>3</experiments>
</comment>
<comment type="interaction">
    <interactant intactId="EBI-747736">
        <id>Q15561</id>
    </interactant>
    <interactant intactId="EBI-2805516">
        <id>P31321</id>
        <label>PRKAR1B</label>
    </interactant>
    <organismsDiffer>false</organismsDiffer>
    <experiments>3</experiments>
</comment>
<comment type="interaction">
    <interactant intactId="EBI-747736">
        <id>Q15561</id>
    </interactant>
    <interactant intactId="EBI-6912267">
        <id>A6NK89</id>
        <label>RASSF10</label>
    </interactant>
    <organismsDiffer>false</organismsDiffer>
    <experiments>3</experiments>
</comment>
<comment type="interaction">
    <interactant intactId="EBI-747736">
        <id>Q15561</id>
    </interactant>
    <interactant intactId="EBI-11957366">
        <id>Q59EK9-3</id>
        <label>RUNDC3A</label>
    </interactant>
    <organismsDiffer>false</organismsDiffer>
    <experiments>3</experiments>
</comment>
<comment type="interaction">
    <interactant intactId="EBI-747736">
        <id>Q15561</id>
    </interactant>
    <interactant intactId="EBI-12001422">
        <id>Q01196-8</id>
        <label>RUNX1</label>
    </interactant>
    <organismsDiffer>false</organismsDiffer>
    <experiments>5</experiments>
</comment>
<comment type="interaction">
    <interactant intactId="EBI-747736">
        <id>Q15561</id>
    </interactant>
    <interactant intactId="EBI-711613">
        <id>P21673</id>
        <label>SAT1</label>
    </interactant>
    <organismsDiffer>false</organismsDiffer>
    <experiments>3</experiments>
</comment>
<comment type="interaction">
    <interactant intactId="EBI-747736">
        <id>Q15561</id>
    </interactant>
    <interactant intactId="EBI-6117072">
        <id>Q86VW0</id>
        <label>SESTD1</label>
    </interactant>
    <organismsDiffer>false</organismsDiffer>
    <experiments>3</experiments>
</comment>
<comment type="interaction">
    <interactant intactId="EBI-747736">
        <id>Q15561</id>
    </interactant>
    <interactant intactId="EBI-741237">
        <id>O60504</id>
        <label>SORBS3</label>
    </interactant>
    <organismsDiffer>false</organismsDiffer>
    <experiments>3</experiments>
</comment>
<comment type="interaction">
    <interactant intactId="EBI-747736">
        <id>Q15561</id>
    </interactant>
    <interactant intactId="EBI-11741437">
        <id>Q08117-2</id>
        <label>TLE5</label>
    </interactant>
    <organismsDiffer>false</organismsDiffer>
    <experiments>3</experiments>
</comment>
<comment type="interaction">
    <interactant intactId="EBI-747736">
        <id>Q15561</id>
    </interactant>
    <interactant intactId="EBI-359224">
        <id>Q13077</id>
        <label>TRAF1</label>
    </interactant>
    <organismsDiffer>false</organismsDiffer>
    <experiments>6</experiments>
</comment>
<comment type="interaction">
    <interactant intactId="EBI-747736">
        <id>Q15561</id>
    </interactant>
    <interactant intactId="EBI-719493">
        <id>P14373</id>
        <label>TRIM27</label>
    </interactant>
    <organismsDiffer>false</organismsDiffer>
    <experiments>6</experiments>
</comment>
<comment type="interaction">
    <interactant intactId="EBI-747736">
        <id>Q15561</id>
    </interactant>
    <interactant intactId="EBI-2130429">
        <id>Q9BYV2</id>
        <label>TRIM54</label>
    </interactant>
    <organismsDiffer>false</organismsDiffer>
    <experiments>3</experiments>
</comment>
<comment type="interaction">
    <interactant intactId="EBI-747736">
        <id>Q15561</id>
    </interactant>
    <interactant intactId="EBI-11983165">
        <id>Q99990</id>
        <label>VGLL1</label>
    </interactant>
    <organismsDiffer>false</organismsDiffer>
    <experiments>3</experiments>
</comment>
<comment type="interaction">
    <interactant intactId="EBI-747736">
        <id>Q15561</id>
    </interactant>
    <interactant intactId="EBI-11957216">
        <id>A8MV65-2</id>
        <label>VGLL3</label>
    </interactant>
    <organismsDiffer>false</organismsDiffer>
    <experiments>3</experiments>
</comment>
<comment type="interaction">
    <interactant intactId="EBI-747736">
        <id>Q15561</id>
    </interactant>
    <interactant intactId="EBI-5278589">
        <id>Q14135</id>
        <label>VGLL4</label>
    </interactant>
    <organismsDiffer>false</organismsDiffer>
    <experiments>4</experiments>
</comment>
<comment type="interaction">
    <interactant intactId="EBI-747736">
        <id>Q15561</id>
    </interactant>
    <interactant intactId="EBI-2799833">
        <id>Q8N1B4</id>
        <label>VPS52</label>
    </interactant>
    <organismsDiffer>false</organismsDiffer>
    <experiments>3</experiments>
</comment>
<comment type="interaction">
    <interactant intactId="EBI-747736">
        <id>Q15561</id>
    </interactant>
    <interactant intactId="EBI-740160">
        <id>Q9NP79</id>
        <label>VTA1</label>
    </interactant>
    <organismsDiffer>false</organismsDiffer>
    <experiments>4</experiments>
</comment>
<comment type="interaction">
    <interactant intactId="EBI-747736">
        <id>Q15561</id>
    </interactant>
    <interactant intactId="EBI-747743">
        <id>Q9GZV5</id>
        <label>WWTR1</label>
    </interactant>
    <organismsDiffer>false</organismsDiffer>
    <experiments>11</experiments>
</comment>
<comment type="interaction">
    <interactant intactId="EBI-747736">
        <id>Q15561</id>
    </interactant>
    <interactant intactId="EBI-1044059">
        <id>P46937</id>
        <label>YAP1</label>
    </interactant>
    <organismsDiffer>false</organismsDiffer>
    <experiments>12</experiments>
</comment>
<comment type="interaction">
    <interactant intactId="EBI-747736">
        <id>Q15561</id>
    </interactant>
    <interactant intactId="EBI-9253433">
        <id>Q80V24</id>
        <label>Vgll4</label>
    </interactant>
    <organismsDiffer>true</organismsDiffer>
    <experiments>3</experiments>
</comment>
<comment type="subcellular location">
    <subcellularLocation>
        <location>Nucleus</location>
    </subcellularLocation>
</comment>
<comment type="alternative products">
    <event type="alternative splicing"/>
    <isoform>
        <id>Q15561-1</id>
        <name>1</name>
        <sequence type="displayed"/>
    </isoform>
    <isoform>
        <id>Q15561-2</id>
        <name>2</name>
        <sequence type="described" ref="VSP_043099"/>
    </isoform>
    <isoform>
        <id>Q15561-3</id>
        <name>3</name>
        <sequence type="described" ref="VSP_045657"/>
    </isoform>
</comment>
<comment type="tissue specificity">
    <text>Preferentially expressed in skeletal muscle. Lower levels in pancreas, placenta, and heart.</text>
</comment>
<comment type="sequence caution" evidence="8">
    <conflict type="miscellaneous discrepancy">
        <sequence resource="EMBL-CDS" id="CAA64212"/>
    </conflict>
    <text>Unusual initiator. The initiator methionine is coded by a non-canonical ATA isoleucine codon.</text>
</comment>
<keyword id="KW-0002">3D-structure</keyword>
<keyword id="KW-0010">Activator</keyword>
<keyword id="KW-0025">Alternative splicing</keyword>
<keyword id="KW-0238">DNA-binding</keyword>
<keyword id="KW-0539">Nucleus</keyword>
<keyword id="KW-1267">Proteomics identification</keyword>
<keyword id="KW-1185">Reference proteome</keyword>
<keyword id="KW-0804">Transcription</keyword>
<keyword id="KW-0805">Transcription regulation</keyword>
<organism>
    <name type="scientific">Homo sapiens</name>
    <name type="common">Human</name>
    <dbReference type="NCBI Taxonomy" id="9606"/>
    <lineage>
        <taxon>Eukaryota</taxon>
        <taxon>Metazoa</taxon>
        <taxon>Chordata</taxon>
        <taxon>Craniata</taxon>
        <taxon>Vertebrata</taxon>
        <taxon>Euteleostomi</taxon>
        <taxon>Mammalia</taxon>
        <taxon>Eutheria</taxon>
        <taxon>Euarchontoglires</taxon>
        <taxon>Primates</taxon>
        <taxon>Haplorrhini</taxon>
        <taxon>Catarrhini</taxon>
        <taxon>Hominidae</taxon>
        <taxon>Homo</taxon>
    </lineage>
</organism>
<dbReference type="EMBL" id="U63824">
    <property type="protein sequence ID" value="AAC50763.1"/>
    <property type="molecule type" value="mRNA"/>
</dbReference>
<dbReference type="EMBL" id="BX640921">
    <property type="protein sequence ID" value="CAE45959.1"/>
    <property type="molecule type" value="mRNA"/>
</dbReference>
<dbReference type="EMBL" id="AC005911">
    <property type="status" value="NOT_ANNOTATED_CDS"/>
    <property type="molecule type" value="Genomic_DNA"/>
</dbReference>
<dbReference type="EMBL" id="AC125807">
    <property type="status" value="NOT_ANNOTATED_CDS"/>
    <property type="molecule type" value="Genomic_DNA"/>
</dbReference>
<dbReference type="EMBL" id="AC131234">
    <property type="status" value="NOT_ANNOTATED_CDS"/>
    <property type="molecule type" value="Genomic_DNA"/>
</dbReference>
<dbReference type="EMBL" id="CH471116">
    <property type="protein sequence ID" value="EAW88872.1"/>
    <property type="molecule type" value="Genomic_DNA"/>
</dbReference>
<dbReference type="EMBL" id="BC015497">
    <property type="protein sequence ID" value="AAH15497.2"/>
    <property type="molecule type" value="mRNA"/>
</dbReference>
<dbReference type="EMBL" id="X94438">
    <property type="protein sequence ID" value="CAA64212.2"/>
    <property type="status" value="ALT_SEQ"/>
    <property type="molecule type" value="mRNA"/>
</dbReference>
<dbReference type="EMBL" id="AY101179">
    <property type="protein sequence ID" value="AAM89497.1"/>
    <property type="molecule type" value="mRNA"/>
</dbReference>
<dbReference type="CCDS" id="CCDS31729.1">
    <molecule id="Q15561-1"/>
</dbReference>
<dbReference type="CCDS" id="CCDS31730.1">
    <molecule id="Q15561-3"/>
</dbReference>
<dbReference type="CCDS" id="CCDS41737.1">
    <molecule id="Q15561-2"/>
</dbReference>
<dbReference type="RefSeq" id="NP_003204.2">
    <molecule id="Q15561-1"/>
    <property type="nucleotide sequence ID" value="NM_003213.3"/>
</dbReference>
<dbReference type="RefSeq" id="NP_958849.1">
    <molecule id="Q15561-3"/>
    <property type="nucleotide sequence ID" value="NM_201441.3"/>
</dbReference>
<dbReference type="RefSeq" id="NP_958851.1">
    <molecule id="Q15561-2"/>
    <property type="nucleotide sequence ID" value="NM_201443.3"/>
</dbReference>
<dbReference type="PDB" id="5GZB">
    <property type="method" value="X-ray"/>
    <property type="resolution" value="2.70 A"/>
    <property type="chains" value="A=36-139"/>
</dbReference>
<dbReference type="PDB" id="5NO6">
    <property type="method" value="X-ray"/>
    <property type="resolution" value="2.88 A"/>
    <property type="chains" value="I/N=40-112"/>
</dbReference>
<dbReference type="PDB" id="5OAQ">
    <property type="method" value="X-ray"/>
    <property type="resolution" value="1.95 A"/>
    <property type="chains" value="A=217-434"/>
</dbReference>
<dbReference type="PDB" id="6GE3">
    <property type="method" value="X-ray"/>
    <property type="resolution" value="1.85 A"/>
    <property type="chains" value="A=216-434"/>
</dbReference>
<dbReference type="PDB" id="6GE4">
    <property type="method" value="X-ray"/>
    <property type="resolution" value="1.97 A"/>
    <property type="chains" value="A=216-434"/>
</dbReference>
<dbReference type="PDB" id="6GE5">
    <property type="method" value="X-ray"/>
    <property type="resolution" value="2.05 A"/>
    <property type="chains" value="A=216-434"/>
</dbReference>
<dbReference type="PDB" id="6GE6">
    <property type="method" value="X-ray"/>
    <property type="resolution" value="1.80 A"/>
    <property type="chains" value="A=216-434"/>
</dbReference>
<dbReference type="PDB" id="6GEC">
    <property type="method" value="X-ray"/>
    <property type="resolution" value="1.70 A"/>
    <property type="chains" value="A=216-434"/>
</dbReference>
<dbReference type="PDB" id="6GEE">
    <property type="method" value="X-ray"/>
    <property type="resolution" value="1.96 A"/>
    <property type="chains" value="A=216-434"/>
</dbReference>
<dbReference type="PDB" id="6GEG">
    <property type="method" value="X-ray"/>
    <property type="resolution" value="2.23 A"/>
    <property type="chains" value="A=216-434"/>
</dbReference>
<dbReference type="PDB" id="6GEI">
    <property type="method" value="X-ray"/>
    <property type="resolution" value="1.65 A"/>
    <property type="chains" value="A=216-434"/>
</dbReference>
<dbReference type="PDB" id="6GEK">
    <property type="method" value="X-ray"/>
    <property type="resolution" value="2.28 A"/>
    <property type="chains" value="A/B=216-434"/>
</dbReference>
<dbReference type="PDB" id="6HIK">
    <property type="method" value="X-ray"/>
    <property type="resolution" value="1.65 A"/>
    <property type="chains" value="A=216-434"/>
</dbReference>
<dbReference type="PDB" id="6Q2X">
    <property type="method" value="X-ray"/>
    <property type="resolution" value="2.10 A"/>
    <property type="chains" value="A=217-434"/>
</dbReference>
<dbReference type="PDB" id="6Q36">
    <property type="method" value="X-ray"/>
    <property type="resolution" value="2.01 A"/>
    <property type="chains" value="A/B=217-434"/>
</dbReference>
<dbReference type="PDB" id="6SEN">
    <property type="method" value="X-ray"/>
    <property type="resolution" value="1.65 A"/>
    <property type="chains" value="A/B=217-434"/>
</dbReference>
<dbReference type="PDB" id="6SEO">
    <property type="method" value="X-ray"/>
    <property type="resolution" value="2.55 A"/>
    <property type="chains" value="A=217-434"/>
</dbReference>
<dbReference type="PDB" id="8A8R">
    <property type="method" value="X-ray"/>
    <property type="resolution" value="1.70 A"/>
    <property type="chains" value="A/B=216-434"/>
</dbReference>
<dbReference type="PDB" id="8C17">
    <property type="method" value="X-ray"/>
    <property type="resolution" value="2.25 A"/>
    <property type="chains" value="A=217-434"/>
</dbReference>
<dbReference type="PDB" id="8CAA">
    <property type="method" value="X-ray"/>
    <property type="resolution" value="2.00 A"/>
    <property type="chains" value="A/B=217-434"/>
</dbReference>
<dbReference type="PDBsum" id="5GZB"/>
<dbReference type="PDBsum" id="5NO6"/>
<dbReference type="PDBsum" id="5OAQ"/>
<dbReference type="PDBsum" id="6GE3"/>
<dbReference type="PDBsum" id="6GE4"/>
<dbReference type="PDBsum" id="6GE5"/>
<dbReference type="PDBsum" id="6GE6"/>
<dbReference type="PDBsum" id="6GEC"/>
<dbReference type="PDBsum" id="6GEE"/>
<dbReference type="PDBsum" id="6GEG"/>
<dbReference type="PDBsum" id="6GEI"/>
<dbReference type="PDBsum" id="6GEK"/>
<dbReference type="PDBsum" id="6HIK"/>
<dbReference type="PDBsum" id="6Q2X"/>
<dbReference type="PDBsum" id="6Q36"/>
<dbReference type="PDBsum" id="6SEN"/>
<dbReference type="PDBsum" id="6SEO"/>
<dbReference type="PDBsum" id="8A8R"/>
<dbReference type="PDBsum" id="8C17"/>
<dbReference type="PDBsum" id="8CAA"/>
<dbReference type="SMR" id="Q15561"/>
<dbReference type="BioGRID" id="112863">
    <property type="interactions" value="77"/>
</dbReference>
<dbReference type="CORUM" id="Q15561"/>
<dbReference type="DIP" id="DIP-61626N"/>
<dbReference type="FunCoup" id="Q15561">
    <property type="interactions" value="2752"/>
</dbReference>
<dbReference type="IntAct" id="Q15561">
    <property type="interactions" value="50"/>
</dbReference>
<dbReference type="MINT" id="Q15561"/>
<dbReference type="STRING" id="9606.ENSP00000352926"/>
<dbReference type="BindingDB" id="Q15561"/>
<dbReference type="ChEMBL" id="CHEMBL4295828"/>
<dbReference type="DrugCentral" id="Q15561"/>
<dbReference type="GuidetoPHARMACOLOGY" id="3243"/>
<dbReference type="GlyGen" id="Q15561">
    <property type="glycosylation" value="3 sites, 1 O-linked glycan (2 sites)"/>
</dbReference>
<dbReference type="iPTMnet" id="Q15561"/>
<dbReference type="PhosphoSitePlus" id="Q15561"/>
<dbReference type="SwissPalm" id="Q15561"/>
<dbReference type="BioMuta" id="TEAD4"/>
<dbReference type="jPOST" id="Q15561"/>
<dbReference type="MassIVE" id="Q15561"/>
<dbReference type="PaxDb" id="9606-ENSP00000352926"/>
<dbReference type="PeptideAtlas" id="Q15561"/>
<dbReference type="ProteomicsDB" id="34410"/>
<dbReference type="ProteomicsDB" id="60634">
    <molecule id="Q15561-1"/>
</dbReference>
<dbReference type="ProteomicsDB" id="60635">
    <molecule id="Q15561-2"/>
</dbReference>
<dbReference type="Pumba" id="Q15561"/>
<dbReference type="Antibodypedia" id="22199">
    <property type="antibodies" value="284 antibodies from 30 providers"/>
</dbReference>
<dbReference type="DNASU" id="7004"/>
<dbReference type="Ensembl" id="ENST00000358409.7">
    <molecule id="Q15561-3"/>
    <property type="protein sequence ID" value="ENSP00000351184.3"/>
    <property type="gene ID" value="ENSG00000197905.10"/>
</dbReference>
<dbReference type="Ensembl" id="ENST00000359864.8">
    <molecule id="Q15561-1"/>
    <property type="protein sequence ID" value="ENSP00000352926.3"/>
    <property type="gene ID" value="ENSG00000197905.10"/>
</dbReference>
<dbReference type="Ensembl" id="ENST00000397122.6">
    <molecule id="Q15561-2"/>
    <property type="protein sequence ID" value="ENSP00000380311.2"/>
    <property type="gene ID" value="ENSG00000197905.10"/>
</dbReference>
<dbReference type="GeneID" id="7004"/>
<dbReference type="KEGG" id="hsa:7004"/>
<dbReference type="MANE-Select" id="ENST00000359864.8">
    <property type="protein sequence ID" value="ENSP00000352926.3"/>
    <property type="RefSeq nucleotide sequence ID" value="NM_003213.4"/>
    <property type="RefSeq protein sequence ID" value="NP_003204.2"/>
</dbReference>
<dbReference type="UCSC" id="uc001qln.4">
    <molecule id="Q15561-1"/>
    <property type="organism name" value="human"/>
</dbReference>
<dbReference type="AGR" id="HGNC:11717"/>
<dbReference type="CTD" id="7004"/>
<dbReference type="DisGeNET" id="7004"/>
<dbReference type="GeneCards" id="TEAD4"/>
<dbReference type="HGNC" id="HGNC:11717">
    <property type="gene designation" value="TEAD4"/>
</dbReference>
<dbReference type="HPA" id="ENSG00000197905">
    <property type="expression patterns" value="Tissue enhanced (skeletal)"/>
</dbReference>
<dbReference type="MIM" id="601714">
    <property type="type" value="gene"/>
</dbReference>
<dbReference type="neXtProt" id="NX_Q15561"/>
<dbReference type="OpenTargets" id="ENSG00000197905"/>
<dbReference type="PharmGKB" id="PA36435"/>
<dbReference type="VEuPathDB" id="HostDB:ENSG00000197905"/>
<dbReference type="eggNOG" id="KOG3841">
    <property type="taxonomic scope" value="Eukaryota"/>
</dbReference>
<dbReference type="GeneTree" id="ENSGT00950000182956"/>
<dbReference type="HOGENOM" id="CLU_012515_0_0_1"/>
<dbReference type="InParanoid" id="Q15561"/>
<dbReference type="OMA" id="TAFHRKV"/>
<dbReference type="OrthoDB" id="10006572at2759"/>
<dbReference type="PAN-GO" id="Q15561">
    <property type="GO annotations" value="6 GO annotations based on evolutionary models"/>
</dbReference>
<dbReference type="PhylomeDB" id="Q15561"/>
<dbReference type="PathwayCommons" id="Q15561"/>
<dbReference type="Reactome" id="R-HSA-2032785">
    <property type="pathway name" value="YAP1- and WWTR1 (TAZ)-stimulated gene expression"/>
</dbReference>
<dbReference type="Reactome" id="R-HSA-8951671">
    <property type="pathway name" value="RUNX3 regulates YAP1-mediated transcription"/>
</dbReference>
<dbReference type="Reactome" id="R-HSA-9796292">
    <property type="pathway name" value="Formation of axial mesoderm"/>
</dbReference>
<dbReference type="Reactome" id="R-HSA-9819196">
    <property type="pathway name" value="Zygotic genome activation (ZGA)"/>
</dbReference>
<dbReference type="SignaLink" id="Q15561"/>
<dbReference type="SIGNOR" id="Q15561"/>
<dbReference type="BioGRID-ORCS" id="7004">
    <property type="hits" value="56 hits in 1176 CRISPR screens"/>
</dbReference>
<dbReference type="CD-CODE" id="38EC0B30">
    <property type="entry name" value="Transcriptional condensate"/>
</dbReference>
<dbReference type="ChiTaRS" id="TEAD4">
    <property type="organism name" value="human"/>
</dbReference>
<dbReference type="GeneWiki" id="TEAD4"/>
<dbReference type="GenomeRNAi" id="7004"/>
<dbReference type="Pharos" id="Q15561">
    <property type="development level" value="Tchem"/>
</dbReference>
<dbReference type="PRO" id="PR:Q15561"/>
<dbReference type="Proteomes" id="UP000005640">
    <property type="component" value="Chromosome 12"/>
</dbReference>
<dbReference type="RNAct" id="Q15561">
    <property type="molecule type" value="protein"/>
</dbReference>
<dbReference type="Bgee" id="ENSG00000197905">
    <property type="expression patterns" value="Expressed in hindlimb stylopod muscle and 155 other cell types or tissues"/>
</dbReference>
<dbReference type="ExpressionAtlas" id="Q15561">
    <property type="expression patterns" value="baseline and differential"/>
</dbReference>
<dbReference type="GO" id="GO:0000785">
    <property type="term" value="C:chromatin"/>
    <property type="evidence" value="ECO:0000247"/>
    <property type="project" value="NTNU_SB"/>
</dbReference>
<dbReference type="GO" id="GO:0005737">
    <property type="term" value="C:cytoplasm"/>
    <property type="evidence" value="ECO:0007669"/>
    <property type="project" value="Ensembl"/>
</dbReference>
<dbReference type="GO" id="GO:0005654">
    <property type="term" value="C:nucleoplasm"/>
    <property type="evidence" value="ECO:0000314"/>
    <property type="project" value="HPA"/>
</dbReference>
<dbReference type="GO" id="GO:0005634">
    <property type="term" value="C:nucleus"/>
    <property type="evidence" value="ECO:0000314"/>
    <property type="project" value="CAFA"/>
</dbReference>
<dbReference type="GO" id="GO:0032993">
    <property type="term" value="C:protein-DNA complex"/>
    <property type="evidence" value="ECO:0007669"/>
    <property type="project" value="Ensembl"/>
</dbReference>
<dbReference type="GO" id="GO:0005667">
    <property type="term" value="C:transcription regulator complex"/>
    <property type="evidence" value="ECO:0000318"/>
    <property type="project" value="GO_Central"/>
</dbReference>
<dbReference type="GO" id="GO:0001228">
    <property type="term" value="F:DNA-binding transcription activator activity, RNA polymerase II-specific"/>
    <property type="evidence" value="ECO:0007669"/>
    <property type="project" value="Ensembl"/>
</dbReference>
<dbReference type="GO" id="GO:0003700">
    <property type="term" value="F:DNA-binding transcription factor activity"/>
    <property type="evidence" value="ECO:0000314"/>
    <property type="project" value="UniProtKB"/>
</dbReference>
<dbReference type="GO" id="GO:0000981">
    <property type="term" value="F:DNA-binding transcription factor activity, RNA polymerase II-specific"/>
    <property type="evidence" value="ECO:0000247"/>
    <property type="project" value="NTNU_SB"/>
</dbReference>
<dbReference type="GO" id="GO:0000978">
    <property type="term" value="F:RNA polymerase II cis-regulatory region sequence-specific DNA binding"/>
    <property type="evidence" value="ECO:0000318"/>
    <property type="project" value="GO_Central"/>
</dbReference>
<dbReference type="GO" id="GO:0001708">
    <property type="term" value="P:cell fate specification"/>
    <property type="evidence" value="ECO:0007669"/>
    <property type="project" value="Ensembl"/>
</dbReference>
<dbReference type="GO" id="GO:0006351">
    <property type="term" value="P:DNA-templated transcription"/>
    <property type="evidence" value="ECO:0007669"/>
    <property type="project" value="InterPro"/>
</dbReference>
<dbReference type="GO" id="GO:0007566">
    <property type="term" value="P:embryo implantation"/>
    <property type="evidence" value="ECO:0007669"/>
    <property type="project" value="Ensembl"/>
</dbReference>
<dbReference type="GO" id="GO:0048568">
    <property type="term" value="P:embryonic organ development"/>
    <property type="evidence" value="ECO:0000318"/>
    <property type="project" value="GO_Central"/>
</dbReference>
<dbReference type="GO" id="GO:0035329">
    <property type="term" value="P:hippo signaling"/>
    <property type="evidence" value="ECO:0000314"/>
    <property type="project" value="UniProtKB"/>
</dbReference>
<dbReference type="GO" id="GO:0007517">
    <property type="term" value="P:muscle organ development"/>
    <property type="evidence" value="ECO:0000304"/>
    <property type="project" value="ProtInc"/>
</dbReference>
<dbReference type="GO" id="GO:1902459">
    <property type="term" value="P:positive regulation of stem cell population maintenance"/>
    <property type="evidence" value="ECO:0007669"/>
    <property type="project" value="Ensembl"/>
</dbReference>
<dbReference type="GO" id="GO:0006357">
    <property type="term" value="P:regulation of transcription by RNA polymerase II"/>
    <property type="evidence" value="ECO:0000318"/>
    <property type="project" value="GO_Central"/>
</dbReference>
<dbReference type="GO" id="GO:0001501">
    <property type="term" value="P:skeletal system development"/>
    <property type="evidence" value="ECO:0000304"/>
    <property type="project" value="ProtInc"/>
</dbReference>
<dbReference type="GO" id="GO:0001830">
    <property type="term" value="P:trophectodermal cell fate commitment"/>
    <property type="evidence" value="ECO:0007669"/>
    <property type="project" value="Ensembl"/>
</dbReference>
<dbReference type="FunFam" id="2.70.50.80:FF:000001">
    <property type="entry name" value="Transcriptional enhancer factor TEF-1, putative"/>
    <property type="match status" value="1"/>
</dbReference>
<dbReference type="Gene3D" id="2.70.50.80">
    <property type="match status" value="1"/>
</dbReference>
<dbReference type="Gene3D" id="6.10.20.40">
    <property type="entry name" value="TEA/ATTS domain"/>
    <property type="match status" value="1"/>
</dbReference>
<dbReference type="InterPro" id="IPR000818">
    <property type="entry name" value="TEA/ATTS_dom"/>
</dbReference>
<dbReference type="InterPro" id="IPR038096">
    <property type="entry name" value="TEA/ATTS_sf"/>
</dbReference>
<dbReference type="InterPro" id="IPR050937">
    <property type="entry name" value="TEC1_TEAD_TF"/>
</dbReference>
<dbReference type="InterPro" id="IPR027255">
    <property type="entry name" value="TEF-3"/>
</dbReference>
<dbReference type="InterPro" id="IPR016361">
    <property type="entry name" value="TEF_metazoa"/>
</dbReference>
<dbReference type="InterPro" id="IPR041086">
    <property type="entry name" value="YBD"/>
</dbReference>
<dbReference type="PANTHER" id="PTHR11834">
    <property type="entry name" value="TRANSCRIPTIONAL ENHANCER FACTOR TEF RELATED"/>
    <property type="match status" value="1"/>
</dbReference>
<dbReference type="PANTHER" id="PTHR11834:SF2">
    <property type="entry name" value="TRANSCRIPTIONAL ENHANCER FACTOR TEF-3"/>
    <property type="match status" value="1"/>
</dbReference>
<dbReference type="Pfam" id="PF01285">
    <property type="entry name" value="TEA"/>
    <property type="match status" value="1"/>
</dbReference>
<dbReference type="Pfam" id="PF17725">
    <property type="entry name" value="YBD"/>
    <property type="match status" value="1"/>
</dbReference>
<dbReference type="PIRSF" id="PIRSF002603">
    <property type="entry name" value="TEF"/>
    <property type="match status" value="1"/>
</dbReference>
<dbReference type="PIRSF" id="PIRSF500722">
    <property type="entry name" value="TEF-3"/>
    <property type="match status" value="1"/>
</dbReference>
<dbReference type="PRINTS" id="PR00065">
    <property type="entry name" value="TEADOMAIN"/>
</dbReference>
<dbReference type="SMART" id="SM00426">
    <property type="entry name" value="TEA"/>
    <property type="match status" value="1"/>
</dbReference>
<dbReference type="PROSITE" id="PS00554">
    <property type="entry name" value="TEA_1"/>
    <property type="match status" value="1"/>
</dbReference>
<dbReference type="PROSITE" id="PS51088">
    <property type="entry name" value="TEA_2"/>
    <property type="match status" value="1"/>
</dbReference>
<proteinExistence type="evidence at protein level"/>
<accession>Q15561</accession>
<accession>H0Y308</accession>
<accession>Q6MZR9</accession>
<accession>Q8NEV5</accession>
<accession>Q92883</accession>
<accession>Q96BK2</accession>
<feature type="chain" id="PRO_0000205937" description="Transcriptional enhancer factor TEF-3">
    <location>
        <begin position="1"/>
        <end position="434"/>
    </location>
</feature>
<feature type="DNA-binding region" description="TEA" evidence="1">
    <location>
        <begin position="36"/>
        <end position="112"/>
    </location>
</feature>
<feature type="region of interest" description="Disordered" evidence="2">
    <location>
        <begin position="1"/>
        <end position="42"/>
    </location>
</feature>
<feature type="region of interest" description="Disordered" evidence="2">
    <location>
        <begin position="188"/>
        <end position="215"/>
    </location>
</feature>
<feature type="compositionally biased region" description="Polar residues" evidence="2">
    <location>
        <begin position="1"/>
        <end position="28"/>
    </location>
</feature>
<feature type="compositionally biased region" description="Pro residues" evidence="2">
    <location>
        <begin position="201"/>
        <end position="213"/>
    </location>
</feature>
<feature type="splice variant" id="VSP_043099" description="In isoform 2." evidence="6">
    <location>
        <begin position="1"/>
        <end position="129"/>
    </location>
</feature>
<feature type="splice variant" id="VSP_045657" description="In isoform 3." evidence="7">
    <location>
        <begin position="119"/>
        <end position="161"/>
    </location>
</feature>
<feature type="sequence variant" id="VAR_052279" description="In dbSNP:rs11550887.">
    <original>P</original>
    <variation>S</variation>
    <location>
        <position position="323"/>
    </location>
</feature>
<feature type="mutagenesis site" description="Reduced transforming ability." evidence="5">
    <original>D</original>
    <variation>A</variation>
    <location>
        <position position="266"/>
    </location>
</feature>
<feature type="mutagenesis site" description="Important loss of interaction with YAP1 and complete loss of transforming ability." evidence="5">
    <original>K</original>
    <variation>A</variation>
    <location>
        <position position="297"/>
    </location>
</feature>
<feature type="mutagenesis site" description="Important loss of interaction with YAP1 and complete loss of transforming ability." evidence="5">
    <original>W</original>
    <variation>A</variation>
    <location>
        <position position="299"/>
    </location>
</feature>
<feature type="mutagenesis site" description="Reduced interaction with YAP1." evidence="5">
    <original>F</original>
    <variation>A</variation>
    <location>
        <position position="337"/>
    </location>
</feature>
<feature type="mutagenesis site" description="Reduced transforming ability." evidence="5">
    <original>F</original>
    <variation>A</variation>
    <location>
        <position position="373"/>
    </location>
</feature>
<feature type="mutagenesis site" description="Reduced transforming ability." evidence="5">
    <original>L</original>
    <variation>A</variation>
    <location>
        <position position="380"/>
    </location>
</feature>
<feature type="mutagenesis site" description="Reduced transforming ability." evidence="5">
    <original>E</original>
    <variation>A</variation>
    <location>
        <position position="391"/>
    </location>
</feature>
<feature type="mutagenesis site" description="Reduced transforming ability." evidence="5">
    <original>F</original>
    <variation>A</variation>
    <location>
        <position position="393"/>
    </location>
</feature>
<feature type="mutagenesis site" description="Reduced transforming ability." evidence="5">
    <original>H</original>
    <variation>A</variation>
    <location>
        <position position="427"/>
    </location>
</feature>
<feature type="mutagenesis site" description="Loss of interaction with YAP1 and also activation by YAP1." evidence="3 5">
    <original>Y</original>
    <variation>A</variation>
    <variation>H</variation>
    <location>
        <position position="429"/>
    </location>
</feature>
<feature type="mutagenesis site" description="Important loss of interaction with YAP1 and complete loss of transforming ability." evidence="3 5">
    <original>Y</original>
    <variation>A</variation>
    <location>
        <position position="429"/>
    </location>
</feature>
<feature type="sequence conflict" description="In Ref. 1; AAC50763." evidence="8" ref="1">
    <original>A</original>
    <variation>G</variation>
    <location>
        <position position="39"/>
    </location>
</feature>
<feature type="sequence conflict" description="In Ref. 1; AAC50763." evidence="8" ref="1">
    <original>A</original>
    <variation>R</variation>
    <location>
        <position position="149"/>
    </location>
</feature>
<feature type="sequence conflict" description="In Ref. 1; AAC50763." evidence="8" ref="1">
    <original>G</original>
    <variation>E</variation>
    <location>
        <position position="172"/>
    </location>
</feature>
<feature type="sequence conflict" description="In Ref. 1; AAC50763." evidence="8" ref="1">
    <original>SVA</original>
    <variation>RRG</variation>
    <location>
        <begin position="218"/>
        <end position="220"/>
    </location>
</feature>
<feature type="sequence conflict" description="In Ref. 1; AAC50763." evidence="8" ref="1">
    <original>SD</original>
    <variation>LR</variation>
    <location>
        <begin position="258"/>
        <end position="259"/>
    </location>
</feature>
<feature type="helix" evidence="9">
    <location>
        <begin position="45"/>
        <end position="57"/>
    </location>
</feature>
<feature type="strand" evidence="10">
    <location>
        <begin position="70"/>
        <end position="73"/>
    </location>
</feature>
<feature type="helix" evidence="9">
    <location>
        <begin position="77"/>
        <end position="88"/>
    </location>
</feature>
<feature type="helix" evidence="9">
    <location>
        <begin position="95"/>
        <end position="112"/>
    </location>
</feature>
<feature type="helix" evidence="9">
    <location>
        <begin position="114"/>
        <end position="119"/>
    </location>
</feature>
<feature type="helix" evidence="9">
    <location>
        <begin position="121"/>
        <end position="131"/>
    </location>
</feature>
<feature type="strand" evidence="15">
    <location>
        <begin position="218"/>
        <end position="220"/>
    </location>
</feature>
<feature type="strand" evidence="11">
    <location>
        <begin position="225"/>
        <end position="238"/>
    </location>
</feature>
<feature type="strand" evidence="11">
    <location>
        <begin position="241"/>
        <end position="254"/>
    </location>
</feature>
<feature type="helix" evidence="14">
    <location>
        <begin position="256"/>
        <end position="258"/>
    </location>
</feature>
<feature type="strand" evidence="11">
    <location>
        <begin position="264"/>
        <end position="266"/>
    </location>
</feature>
<feature type="helix" evidence="11">
    <location>
        <begin position="267"/>
        <end position="269"/>
    </location>
</feature>
<feature type="helix" evidence="11">
    <location>
        <begin position="271"/>
        <end position="273"/>
    </location>
</feature>
<feature type="helix" evidence="11">
    <location>
        <begin position="281"/>
        <end position="287"/>
    </location>
</feature>
<feature type="helix" evidence="11">
    <location>
        <begin position="290"/>
        <end position="292"/>
    </location>
</feature>
<feature type="strand" evidence="11">
    <location>
        <begin position="293"/>
        <end position="300"/>
    </location>
</feature>
<feature type="strand" evidence="11">
    <location>
        <begin position="312"/>
        <end position="324"/>
    </location>
</feature>
<feature type="strand" evidence="11">
    <location>
        <begin position="327"/>
        <end position="336"/>
    </location>
</feature>
<feature type="strand" evidence="11">
    <location>
        <begin position="339"/>
        <end position="349"/>
    </location>
</feature>
<feature type="strand" evidence="11">
    <location>
        <begin position="351"/>
        <end position="353"/>
    </location>
</feature>
<feature type="strand" evidence="11">
    <location>
        <begin position="356"/>
        <end position="365"/>
    </location>
</feature>
<feature type="helix" evidence="11">
    <location>
        <begin position="368"/>
        <end position="378"/>
    </location>
</feature>
<feature type="strand" evidence="13">
    <location>
        <begin position="380"/>
        <end position="382"/>
    </location>
</feature>
<feature type="helix" evidence="11">
    <location>
        <begin position="383"/>
        <end position="390"/>
    </location>
</feature>
<feature type="strand" evidence="11">
    <location>
        <begin position="393"/>
        <end position="401"/>
    </location>
</feature>
<feature type="turn" evidence="11">
    <location>
        <begin position="402"/>
        <end position="404"/>
    </location>
</feature>
<feature type="strand" evidence="11">
    <location>
        <begin position="407"/>
        <end position="417"/>
    </location>
</feature>
<feature type="strand" evidence="12">
    <location>
        <begin position="420"/>
        <end position="422"/>
    </location>
</feature>
<feature type="strand" evidence="11">
    <location>
        <begin position="425"/>
        <end position="432"/>
    </location>
</feature>
<evidence type="ECO:0000255" key="1">
    <source>
        <dbReference type="PROSITE-ProRule" id="PRU00505"/>
    </source>
</evidence>
<evidence type="ECO:0000256" key="2">
    <source>
        <dbReference type="SAM" id="MobiDB-lite"/>
    </source>
</evidence>
<evidence type="ECO:0000269" key="3">
    <source>
    </source>
</evidence>
<evidence type="ECO:0000269" key="4">
    <source>
    </source>
</evidence>
<evidence type="ECO:0000269" key="5">
    <source>
    </source>
</evidence>
<evidence type="ECO:0000303" key="6">
    <source>
    </source>
</evidence>
<evidence type="ECO:0000303" key="7">
    <source ref="7"/>
</evidence>
<evidence type="ECO:0000305" key="8"/>
<evidence type="ECO:0007829" key="9">
    <source>
        <dbReference type="PDB" id="5GZB"/>
    </source>
</evidence>
<evidence type="ECO:0007829" key="10">
    <source>
        <dbReference type="PDB" id="5NO6"/>
    </source>
</evidence>
<evidence type="ECO:0007829" key="11">
    <source>
        <dbReference type="PDB" id="6GEI"/>
    </source>
</evidence>
<evidence type="ECO:0007829" key="12">
    <source>
        <dbReference type="PDB" id="6GEK"/>
    </source>
</evidence>
<evidence type="ECO:0007829" key="13">
    <source>
        <dbReference type="PDB" id="6HIK"/>
    </source>
</evidence>
<evidence type="ECO:0007829" key="14">
    <source>
        <dbReference type="PDB" id="6Q36"/>
    </source>
</evidence>
<evidence type="ECO:0007829" key="15">
    <source>
        <dbReference type="PDB" id="6SEO"/>
    </source>
</evidence>
<protein>
    <recommendedName>
        <fullName>Transcriptional enhancer factor TEF-3</fullName>
    </recommendedName>
    <alternativeName>
        <fullName>TEA domain family member 4</fullName>
        <shortName>TEAD-4</shortName>
    </alternativeName>
    <alternativeName>
        <fullName>Transcription factor 13-like 1</fullName>
    </alternativeName>
    <alternativeName>
        <fullName>Transcription factor RTEF-1</fullName>
    </alternativeName>
</protein>
<sequence length="434" mass="48329">MEGTAGTITSNEWSSPTSPEGSTASGGSQALDKPIDNDAEGVWSPDIEQSFQEALAIYPPCGRRKIILSDEGKMYGRNELIARYIKLRTGKTRTRKQVSSHIQVLARRKAREIQAKLKDQAAKDKALQSMAAMSSAQIISATAFHSSMALARGPGRPAVSGFWQGALPGQAGTSHDVKPFSQQTYAVQPPLPLPGFESPAGPAPSPSAPPAPPWQGRSVASSKLWMLEFSAFLEQQQDPDTYNKHLFVHIGQSSPSYSDPYLEAVDIRQIYDKFPEKKGGLKDLFERGPSNAFFLVKFWADLNTNIEDEGSSFYGVSSQYESPENMIITCSTKVCSFGKQVVEKVETEYARYENGHYSYRIHRSPLCEYMINFIHKLKHLPEKYMMNSVLENFTILQVVTNRDTQETLLCIAYVFEVSASEHGAQHHIYRLVKE</sequence>
<name>TEAD4_HUMAN</name>
<reference key="1">
    <citation type="journal article" date="1996" name="Genomics">
        <title>Cloning of human RTEF-1, a transcriptional enhancer factor-1-related gene preferentially expressed in skeletal muscle: evidence for an ancient multigene family.</title>
        <authorList>
            <person name="Stewart A.F.R."/>
            <person name="Richard C.W. III"/>
            <person name="Suzow J."/>
            <person name="Stephan D."/>
            <person name="Weremowicz S."/>
            <person name="Morton C.C."/>
            <person name="Adra C.N."/>
        </authorList>
    </citation>
    <scope>NUCLEOTIDE SEQUENCE [MRNA] (ISOFORM 1)</scope>
    <source>
        <tissue>Heart</tissue>
    </source>
</reference>
<reference key="2">
    <citation type="journal article" date="2007" name="BMC Genomics">
        <title>The full-ORF clone resource of the German cDNA consortium.</title>
        <authorList>
            <person name="Bechtel S."/>
            <person name="Rosenfelder H."/>
            <person name="Duda A."/>
            <person name="Schmidt C.P."/>
            <person name="Ernst U."/>
            <person name="Wellenreuther R."/>
            <person name="Mehrle A."/>
            <person name="Schuster C."/>
            <person name="Bahr A."/>
            <person name="Bloecker H."/>
            <person name="Heubner D."/>
            <person name="Hoerlein A."/>
            <person name="Michel G."/>
            <person name="Wedler H."/>
            <person name="Koehrer K."/>
            <person name="Ottenwaelder B."/>
            <person name="Poustka A."/>
            <person name="Wiemann S."/>
            <person name="Schupp I."/>
        </authorList>
    </citation>
    <scope>NUCLEOTIDE SEQUENCE [LARGE SCALE MRNA] (ISOFORM 2)</scope>
    <source>
        <tissue>Uterine endothelium</tissue>
    </source>
</reference>
<reference key="3">
    <citation type="journal article" date="2006" name="Nature">
        <title>The finished DNA sequence of human chromosome 12.</title>
        <authorList>
            <person name="Scherer S.E."/>
            <person name="Muzny D.M."/>
            <person name="Buhay C.J."/>
            <person name="Chen R."/>
            <person name="Cree A."/>
            <person name="Ding Y."/>
            <person name="Dugan-Rocha S."/>
            <person name="Gill R."/>
            <person name="Gunaratne P."/>
            <person name="Harris R.A."/>
            <person name="Hawes A.C."/>
            <person name="Hernandez J."/>
            <person name="Hodgson A.V."/>
            <person name="Hume J."/>
            <person name="Jackson A."/>
            <person name="Khan Z.M."/>
            <person name="Kovar-Smith C."/>
            <person name="Lewis L.R."/>
            <person name="Lozado R.J."/>
            <person name="Metzker M.L."/>
            <person name="Milosavljevic A."/>
            <person name="Miner G.R."/>
            <person name="Montgomery K.T."/>
            <person name="Morgan M.B."/>
            <person name="Nazareth L.V."/>
            <person name="Scott G."/>
            <person name="Sodergren E."/>
            <person name="Song X.-Z."/>
            <person name="Steffen D."/>
            <person name="Lovering R.C."/>
            <person name="Wheeler D.A."/>
            <person name="Worley K.C."/>
            <person name="Yuan Y."/>
            <person name="Zhang Z."/>
            <person name="Adams C.Q."/>
            <person name="Ansari-Lari M.A."/>
            <person name="Ayele M."/>
            <person name="Brown M.J."/>
            <person name="Chen G."/>
            <person name="Chen Z."/>
            <person name="Clerc-Blankenburg K.P."/>
            <person name="Davis C."/>
            <person name="Delgado O."/>
            <person name="Dinh H.H."/>
            <person name="Draper H."/>
            <person name="Gonzalez-Garay M.L."/>
            <person name="Havlak P."/>
            <person name="Jackson L.R."/>
            <person name="Jacob L.S."/>
            <person name="Kelly S.H."/>
            <person name="Li L."/>
            <person name="Li Z."/>
            <person name="Liu J."/>
            <person name="Liu W."/>
            <person name="Lu J."/>
            <person name="Maheshwari M."/>
            <person name="Nguyen B.-V."/>
            <person name="Okwuonu G.O."/>
            <person name="Pasternak S."/>
            <person name="Perez L.M."/>
            <person name="Plopper F.J.H."/>
            <person name="Santibanez J."/>
            <person name="Shen H."/>
            <person name="Tabor P.E."/>
            <person name="Verduzco D."/>
            <person name="Waldron L."/>
            <person name="Wang Q."/>
            <person name="Williams G.A."/>
            <person name="Zhang J."/>
            <person name="Zhou J."/>
            <person name="Allen C.C."/>
            <person name="Amin A.G."/>
            <person name="Anyalebechi V."/>
            <person name="Bailey M."/>
            <person name="Barbaria J.A."/>
            <person name="Bimage K.E."/>
            <person name="Bryant N.P."/>
            <person name="Burch P.E."/>
            <person name="Burkett C.E."/>
            <person name="Burrell K.L."/>
            <person name="Calderon E."/>
            <person name="Cardenas V."/>
            <person name="Carter K."/>
            <person name="Casias K."/>
            <person name="Cavazos I."/>
            <person name="Cavazos S.R."/>
            <person name="Ceasar H."/>
            <person name="Chacko J."/>
            <person name="Chan S.N."/>
            <person name="Chavez D."/>
            <person name="Christopoulos C."/>
            <person name="Chu J."/>
            <person name="Cockrell R."/>
            <person name="Cox C.D."/>
            <person name="Dang M."/>
            <person name="Dathorne S.R."/>
            <person name="David R."/>
            <person name="Davis C.M."/>
            <person name="Davy-Carroll L."/>
            <person name="Deshazo D.R."/>
            <person name="Donlin J.E."/>
            <person name="D'Souza L."/>
            <person name="Eaves K.A."/>
            <person name="Egan A."/>
            <person name="Emery-Cohen A.J."/>
            <person name="Escotto M."/>
            <person name="Flagg N."/>
            <person name="Forbes L.D."/>
            <person name="Gabisi A.M."/>
            <person name="Garza M."/>
            <person name="Hamilton C."/>
            <person name="Henderson N."/>
            <person name="Hernandez O."/>
            <person name="Hines S."/>
            <person name="Hogues M.E."/>
            <person name="Huang M."/>
            <person name="Idlebird D.G."/>
            <person name="Johnson R."/>
            <person name="Jolivet A."/>
            <person name="Jones S."/>
            <person name="Kagan R."/>
            <person name="King L.M."/>
            <person name="Leal B."/>
            <person name="Lebow H."/>
            <person name="Lee S."/>
            <person name="LeVan J.M."/>
            <person name="Lewis L.C."/>
            <person name="London P."/>
            <person name="Lorensuhewa L.M."/>
            <person name="Loulseged H."/>
            <person name="Lovett D.A."/>
            <person name="Lucier A."/>
            <person name="Lucier R.L."/>
            <person name="Ma J."/>
            <person name="Madu R.C."/>
            <person name="Mapua P."/>
            <person name="Martindale A.D."/>
            <person name="Martinez E."/>
            <person name="Massey E."/>
            <person name="Mawhiney S."/>
            <person name="Meador M.G."/>
            <person name="Mendez S."/>
            <person name="Mercado C."/>
            <person name="Mercado I.C."/>
            <person name="Merritt C.E."/>
            <person name="Miner Z.L."/>
            <person name="Minja E."/>
            <person name="Mitchell T."/>
            <person name="Mohabbat F."/>
            <person name="Mohabbat K."/>
            <person name="Montgomery B."/>
            <person name="Moore N."/>
            <person name="Morris S."/>
            <person name="Munidasa M."/>
            <person name="Ngo R.N."/>
            <person name="Nguyen N.B."/>
            <person name="Nickerson E."/>
            <person name="Nwaokelemeh O.O."/>
            <person name="Nwokenkwo S."/>
            <person name="Obregon M."/>
            <person name="Oguh M."/>
            <person name="Oragunye N."/>
            <person name="Oviedo R.J."/>
            <person name="Parish B.J."/>
            <person name="Parker D.N."/>
            <person name="Parrish J."/>
            <person name="Parks K.L."/>
            <person name="Paul H.A."/>
            <person name="Payton B.A."/>
            <person name="Perez A."/>
            <person name="Perrin W."/>
            <person name="Pickens A."/>
            <person name="Primus E.L."/>
            <person name="Pu L.-L."/>
            <person name="Puazo M."/>
            <person name="Quiles M.M."/>
            <person name="Quiroz J.B."/>
            <person name="Rabata D."/>
            <person name="Reeves K."/>
            <person name="Ruiz S.J."/>
            <person name="Shao H."/>
            <person name="Sisson I."/>
            <person name="Sonaike T."/>
            <person name="Sorelle R.P."/>
            <person name="Sutton A.E."/>
            <person name="Svatek A.F."/>
            <person name="Svetz L.A."/>
            <person name="Tamerisa K.S."/>
            <person name="Taylor T.R."/>
            <person name="Teague B."/>
            <person name="Thomas N."/>
            <person name="Thorn R.D."/>
            <person name="Trejos Z.Y."/>
            <person name="Trevino B.K."/>
            <person name="Ukegbu O.N."/>
            <person name="Urban J.B."/>
            <person name="Vasquez L.I."/>
            <person name="Vera V.A."/>
            <person name="Villasana D.M."/>
            <person name="Wang L."/>
            <person name="Ward-Moore S."/>
            <person name="Warren J.T."/>
            <person name="Wei X."/>
            <person name="White F."/>
            <person name="Williamson A.L."/>
            <person name="Wleczyk R."/>
            <person name="Wooden H.S."/>
            <person name="Wooden S.H."/>
            <person name="Yen J."/>
            <person name="Yoon L."/>
            <person name="Yoon V."/>
            <person name="Zorrilla S.E."/>
            <person name="Nelson D."/>
            <person name="Kucherlapati R."/>
            <person name="Weinstock G."/>
            <person name="Gibbs R.A."/>
        </authorList>
    </citation>
    <scope>NUCLEOTIDE SEQUENCE [LARGE SCALE GENOMIC DNA]</scope>
</reference>
<reference key="4">
    <citation type="submission" date="2005-09" db="EMBL/GenBank/DDBJ databases">
        <authorList>
            <person name="Mural R.J."/>
            <person name="Istrail S."/>
            <person name="Sutton G."/>
            <person name="Florea L."/>
            <person name="Halpern A.L."/>
            <person name="Mobarry C.M."/>
            <person name="Lippert R."/>
            <person name="Walenz B."/>
            <person name="Shatkay H."/>
            <person name="Dew I."/>
            <person name="Miller J.R."/>
            <person name="Flanigan M.J."/>
            <person name="Edwards N.J."/>
            <person name="Bolanos R."/>
            <person name="Fasulo D."/>
            <person name="Halldorsson B.V."/>
            <person name="Hannenhalli S."/>
            <person name="Turner R."/>
            <person name="Yooseph S."/>
            <person name="Lu F."/>
            <person name="Nusskern D.R."/>
            <person name="Shue B.C."/>
            <person name="Zheng X.H."/>
            <person name="Zhong F."/>
            <person name="Delcher A.L."/>
            <person name="Huson D.H."/>
            <person name="Kravitz S.A."/>
            <person name="Mouchard L."/>
            <person name="Reinert K."/>
            <person name="Remington K.A."/>
            <person name="Clark A.G."/>
            <person name="Waterman M.S."/>
            <person name="Eichler E.E."/>
            <person name="Adams M.D."/>
            <person name="Hunkapiller M.W."/>
            <person name="Myers E.W."/>
            <person name="Venter J.C."/>
        </authorList>
    </citation>
    <scope>NUCLEOTIDE SEQUENCE [LARGE SCALE GENOMIC DNA]</scope>
</reference>
<reference key="5">
    <citation type="journal article" date="2004" name="Genome Res.">
        <title>The status, quality, and expansion of the NIH full-length cDNA project: the Mammalian Gene Collection (MGC).</title>
        <authorList>
            <consortium name="The MGC Project Team"/>
        </authorList>
    </citation>
    <scope>NUCLEOTIDE SEQUENCE [LARGE SCALE MRNA] (ISOFORM 1)</scope>
    <source>
        <tissue>Uterus</tissue>
    </source>
</reference>
<reference key="6">
    <citation type="journal article" date="1996" name="J. Biol. Chem.">
        <title>A novel family of developmentally regulated mammalian transcription factors containing the TEA/ATTS DNA binding domain.</title>
        <authorList>
            <person name="Jacquemin P."/>
            <person name="Hwang J.-J."/>
            <person name="Martial J.A."/>
            <person name="Dolle P."/>
            <person name="Davidson I."/>
        </authorList>
    </citation>
    <scope>NUCLEOTIDE SEQUENCE [MRNA] OF 8-434 (ISOFORM 1)</scope>
</reference>
<reference key="7">
    <citation type="submission" date="2002-04" db="EMBL/GenBank/DDBJ databases">
        <title>Role of MCAT binding factors during muscle hypertrophy.</title>
        <authorList>
            <person name="Tsika R.W."/>
            <person name="Karasseva N.G."/>
            <person name="Tsika G.L."/>
        </authorList>
    </citation>
    <scope>NUCLEOTIDE SEQUENCE [MRNA] OF 8-391 (ISOFORM 3)</scope>
</reference>
<reference key="8">
    <citation type="journal article" date="2008" name="Genes Dev.">
        <title>TEAD mediates YAP-dependent gene induction and growth control.</title>
        <authorList>
            <person name="Zhao B."/>
            <person name="Ye X."/>
            <person name="Yu J."/>
            <person name="Li L."/>
            <person name="Li W."/>
            <person name="Li S."/>
            <person name="Yu J."/>
            <person name="Lin J.D."/>
            <person name="Wang C.Y."/>
            <person name="Chinnaiyan A.M."/>
            <person name="Lai Z.C."/>
            <person name="Guan K.L."/>
        </authorList>
    </citation>
    <scope>FUNCTION</scope>
    <scope>INTERACTION WITH YAP1</scope>
    <scope>MUTAGENESIS OF TYR-429</scope>
</reference>
<reference key="9">
    <citation type="journal article" date="2009" name="J. Biol. Chem.">
        <title>TEAD transcription factors mediate the function of TAZ in cell growth and epithelial-mesenchymal transition.</title>
        <authorList>
            <person name="Zhang H."/>
            <person name="Liu C.Y."/>
            <person name="Zha Z.Y."/>
            <person name="Zhao B."/>
            <person name="Yao J."/>
            <person name="Zhao S."/>
            <person name="Xiong Y."/>
            <person name="Lei Q.Y."/>
            <person name="Guan K.L."/>
        </authorList>
    </citation>
    <scope>IDENTIFICATION BY MASS SPECTROMETRY</scope>
    <scope>FUNCTION</scope>
    <scope>INTERACTION WITH WWTR1</scope>
</reference>
<reference key="10">
    <citation type="journal article" date="2010" name="Genes Dev.">
        <title>Structural basis of YAP recognition by TEAD4 in the hippo pathway.</title>
        <authorList>
            <person name="Chen L."/>
            <person name="Chan S.W."/>
            <person name="Zhang X."/>
            <person name="Walsh M."/>
            <person name="Lim C.J."/>
            <person name="Hong W."/>
            <person name="Song H."/>
        </authorList>
    </citation>
    <scope>INTERACTION WITH YAP1</scope>
    <scope>MUTAGENESIS OF ASP-266; LYS-297; TRP-299; PHE-337; PHE-373; LEU-380; GLU-391; PHE-393; HIS-427 AND TYR-429</scope>
</reference>
<gene>
    <name type="primary">TEAD4</name>
    <name type="synonym">RTEF1</name>
    <name type="synonym">TCF13L1</name>
    <name type="synonym">TEF3</name>
</gene>